<feature type="signal peptide" evidence="2">
    <location>
        <begin position="1"/>
        <end position="21"/>
    </location>
</feature>
<feature type="propeptide" id="PRO_0000452228" evidence="1">
    <location>
        <begin position="22"/>
        <end position="27"/>
    </location>
</feature>
<feature type="peptide" id="PRO_0000452229" description="Peptide HSTX-VIII" evidence="1">
    <location>
        <begin position="25"/>
        <end position="47"/>
    </location>
</feature>
<feature type="modified residue" description="Leucine amide" evidence="1">
    <location>
        <position position="47"/>
    </location>
</feature>
<feature type="disulfide bond" evidence="1">
    <location>
        <begin position="26"/>
        <end position="38"/>
    </location>
</feature>
<feature type="disulfide bond" evidence="1">
    <location>
        <begin position="32"/>
        <end position="43"/>
    </location>
</feature>
<keyword id="KW-0027">Amidation</keyword>
<keyword id="KW-1015">Disulfide bond</keyword>
<keyword id="KW-0964">Secreted</keyword>
<keyword id="KW-0732">Signal</keyword>
<reference key="1">
    <citation type="journal article" date="2018" name="Front. Pharmacol.">
        <title>Novel sodium channel inhibitor from leeches.</title>
        <authorList>
            <person name="Wang G."/>
            <person name="Long C."/>
            <person name="Liu W."/>
            <person name="Xu C."/>
            <person name="Zhang M."/>
            <person name="Li Q."/>
            <person name="Lu Q."/>
            <person name="Meng P."/>
            <person name="Li D."/>
            <person name="Rong M."/>
            <person name="Sun Z."/>
            <person name="Luo X."/>
            <person name="Lai R."/>
        </authorList>
    </citation>
    <scope>NUCLEOTIDE SEQUENCE [MRNA]</scope>
    <source>
        <tissue>Salivary gland</tissue>
    </source>
</reference>
<dbReference type="GO" id="GO:0005576">
    <property type="term" value="C:extracellular region"/>
    <property type="evidence" value="ECO:0007669"/>
    <property type="project" value="UniProtKB-SubCell"/>
</dbReference>
<sequence>MKTLLVFLLLAILVAVLIGNIQVEACKDLTECSAGNRCMHGRCLPMLG</sequence>
<proteinExistence type="inferred from homology"/>
<organism>
    <name type="scientific">Haemadipsa sylvestris</name>
    <name type="common">Indian leech</name>
    <dbReference type="NCBI Taxonomy" id="13555"/>
    <lineage>
        <taxon>Eukaryota</taxon>
        <taxon>Metazoa</taxon>
        <taxon>Spiralia</taxon>
        <taxon>Lophotrochozoa</taxon>
        <taxon>Annelida</taxon>
        <taxon>Clitellata</taxon>
        <taxon>Hirudinea</taxon>
        <taxon>Hirudinida</taxon>
        <taxon>Hirudiniformes</taxon>
        <taxon>Haemadipsidae</taxon>
        <taxon>Haemadipsa</taxon>
    </lineage>
</organism>
<protein>
    <recommendedName>
        <fullName evidence="3">Peptide HSTX-VIII</fullName>
    </recommendedName>
</protein>
<accession>P0DUH1</accession>
<evidence type="ECO:0000250" key="1">
    <source>
        <dbReference type="UniProtKB" id="A0A2L1DGG0"/>
    </source>
</evidence>
<evidence type="ECO:0000255" key="2"/>
<evidence type="ECO:0000303" key="3">
    <source>
    </source>
</evidence>
<evidence type="ECO:0000305" key="4"/>
<comment type="function">
    <text evidence="1">Leech salivary gland peptide with unknown function.</text>
</comment>
<comment type="subcellular location">
    <subcellularLocation>
        <location evidence="1">Secreted</location>
    </subcellularLocation>
</comment>
<comment type="tissue specificity">
    <text evidence="1">Expressed in salivary glands. Highly expressed in the head, body and tail with a 2-3-fold higher expression in the head.</text>
</comment>
<comment type="miscellaneous">
    <text evidence="1">Does not show effect on voltage-gated calcium channels, potassium channels, and tetrodotoxin-sensitive sodium channels. Does not show activity on Nav1.7/SCN9A, and shows very weak activity on cation channel TRPA1.</text>
</comment>
<comment type="similarity">
    <text evidence="4">Belongs to the annelide toxin family.</text>
</comment>
<name>HSTX8_HAESL</name>